<dbReference type="EMBL" id="U51153">
    <property type="protein sequence ID" value="AAB97095.1"/>
    <property type="status" value="ALT_FRAME"/>
    <property type="molecule type" value="mRNA"/>
</dbReference>
<dbReference type="EMBL" id="AF058714">
    <property type="protein sequence ID" value="AAC31165.1"/>
    <property type="molecule type" value="mRNA"/>
</dbReference>
<dbReference type="EMBL" id="AB001321">
    <property type="protein sequence ID" value="BAA28609.1"/>
    <property type="molecule type" value="mRNA"/>
</dbReference>
<dbReference type="EMBL" id="AABR07030074">
    <property type="status" value="NOT_ANNOTATED_CDS"/>
    <property type="molecule type" value="Genomic_DNA"/>
</dbReference>
<dbReference type="EMBL" id="CH473948">
    <property type="protein sequence ID" value="EDM05353.1"/>
    <property type="molecule type" value="Genomic_DNA"/>
</dbReference>
<dbReference type="RefSeq" id="NP_113934.1">
    <property type="nucleotide sequence ID" value="NM_031746.1"/>
</dbReference>
<dbReference type="SMR" id="P70545"/>
<dbReference type="FunCoup" id="P70545">
    <property type="interactions" value="164"/>
</dbReference>
<dbReference type="STRING" id="10116.ENSRNOP00000038185"/>
<dbReference type="TCDB" id="2.A.47.1.3">
    <property type="family name" value="the divalent anion:na(+) symporter (dass) family"/>
</dbReference>
<dbReference type="PhosphoSitePlus" id="P70545"/>
<dbReference type="PaxDb" id="10116-ENSRNOP00000038185"/>
<dbReference type="Ensembl" id="ENSRNOT00000038690.5">
    <property type="protein sequence ID" value="ENSRNOP00000038185.3"/>
    <property type="gene ID" value="ENSRNOG00000010337.6"/>
</dbReference>
<dbReference type="GeneID" id="65202"/>
<dbReference type="KEGG" id="rno:65202"/>
<dbReference type="AGR" id="RGD:61920"/>
<dbReference type="CTD" id="9058"/>
<dbReference type="RGD" id="61920">
    <property type="gene designation" value="Slc13a2"/>
</dbReference>
<dbReference type="eggNOG" id="KOG1281">
    <property type="taxonomic scope" value="Eukaryota"/>
</dbReference>
<dbReference type="GeneTree" id="ENSGT01030000234550"/>
<dbReference type="HOGENOM" id="CLU_005170_9_1_1"/>
<dbReference type="InParanoid" id="P70545"/>
<dbReference type="OMA" id="MLAINSW"/>
<dbReference type="OrthoDB" id="6493944at2759"/>
<dbReference type="PhylomeDB" id="P70545"/>
<dbReference type="TreeFam" id="TF312913"/>
<dbReference type="Reactome" id="R-RNO-433137">
    <property type="pathway name" value="Sodium-coupled sulphate, di- and tri-carboxylate transporters"/>
</dbReference>
<dbReference type="PRO" id="PR:P70545"/>
<dbReference type="Proteomes" id="UP000002494">
    <property type="component" value="Chromosome 10"/>
</dbReference>
<dbReference type="Proteomes" id="UP000234681">
    <property type="component" value="Chromosome 10"/>
</dbReference>
<dbReference type="Bgee" id="ENSRNOG00000010337">
    <property type="expression patterns" value="Expressed in jejunum and 10 other cell types or tissues"/>
</dbReference>
<dbReference type="GO" id="GO:0016324">
    <property type="term" value="C:apical plasma membrane"/>
    <property type="evidence" value="ECO:0000314"/>
    <property type="project" value="UniProtKB"/>
</dbReference>
<dbReference type="GO" id="GO:0005886">
    <property type="term" value="C:plasma membrane"/>
    <property type="evidence" value="ECO:0000318"/>
    <property type="project" value="GO_Central"/>
</dbReference>
<dbReference type="GO" id="GO:0015139">
    <property type="term" value="F:alpha-ketoglutarate transmembrane transporter activity"/>
    <property type="evidence" value="ECO:0000314"/>
    <property type="project" value="UniProtKB"/>
</dbReference>
<dbReference type="GO" id="GO:0015138">
    <property type="term" value="F:fumarate transmembrane transporter activity"/>
    <property type="evidence" value="ECO:0000314"/>
    <property type="project" value="UniProtKB"/>
</dbReference>
<dbReference type="GO" id="GO:0017153">
    <property type="term" value="F:sodium:dicarboxylate symporter activity"/>
    <property type="evidence" value="ECO:0000314"/>
    <property type="project" value="UniProtKB"/>
</dbReference>
<dbReference type="GO" id="GO:0015141">
    <property type="term" value="F:succinate transmembrane transporter activity"/>
    <property type="evidence" value="ECO:0000314"/>
    <property type="project" value="UniProtKB"/>
</dbReference>
<dbReference type="GO" id="GO:0015742">
    <property type="term" value="P:alpha-ketoglutarate transport"/>
    <property type="evidence" value="ECO:0000314"/>
    <property type="project" value="UniProtKB"/>
</dbReference>
<dbReference type="GO" id="GO:0071285">
    <property type="term" value="P:cellular response to lithium ion"/>
    <property type="evidence" value="ECO:0000314"/>
    <property type="project" value="UniProtKB"/>
</dbReference>
<dbReference type="GO" id="GO:0015741">
    <property type="term" value="P:fumarate transport"/>
    <property type="evidence" value="ECO:0000314"/>
    <property type="project" value="UniProtKB"/>
</dbReference>
<dbReference type="GO" id="GO:0071422">
    <property type="term" value="P:succinate transmembrane transport"/>
    <property type="evidence" value="ECO:0000314"/>
    <property type="project" value="UniProtKB"/>
</dbReference>
<dbReference type="CDD" id="cd01115">
    <property type="entry name" value="SLC13_permease"/>
    <property type="match status" value="1"/>
</dbReference>
<dbReference type="InterPro" id="IPR031312">
    <property type="entry name" value="Na/sul_symport_CS"/>
</dbReference>
<dbReference type="InterPro" id="IPR001898">
    <property type="entry name" value="SLC13A/DASS"/>
</dbReference>
<dbReference type="PANTHER" id="PTHR10283">
    <property type="entry name" value="SOLUTE CARRIER FAMILY 13 MEMBER"/>
    <property type="match status" value="1"/>
</dbReference>
<dbReference type="PANTHER" id="PTHR10283:SF82">
    <property type="entry name" value="SOLUTE CARRIER FAMILY 13 MEMBER 2"/>
    <property type="match status" value="1"/>
</dbReference>
<dbReference type="Pfam" id="PF00939">
    <property type="entry name" value="Na_sulph_symp"/>
    <property type="match status" value="1"/>
</dbReference>
<dbReference type="PROSITE" id="PS01271">
    <property type="entry name" value="NA_SULFATE"/>
    <property type="match status" value="1"/>
</dbReference>
<sequence>MATCWPALWAYRFYLIVLCLPIFLLPLPLIVQTKEAYCAYSIILMALLWCTEALPLAVTALFPIVLFPLMGIMDASEVCIEYFKDTNILFVGGLMVAIAVEHWNLHKRIALQVLLIIGVRPALLLLGFMLVTAFLSMWISNTATTAMMVPIGHAVLEQLQGSKKDVEGGNNNPTFELQEECPQKEVTKLDNGQPVSAPSEPRTQKTQEHHRFSQGLSLCICYSASIGGIATLTGTTPNLVLQGQVNSLFPQNGNVVNFASWFGFAFPTMIILLLLAWLWLQVLFLGVNFRKNFGFGEGEEERKQAAFQVIKTQYRLLGPMSFAEKTVTVLFVLLVVLWFTREPGFFPGWGDTVFANEKGQSMASDGTVAIFISLVMFIIPSKIPGLMQDPKKPGKLKAPPAILTWKTVNDKMPWNIVILLGGGFALAKGSEQSGLSEWLGDKLTPLQHIPPSATAVILCLLIAIFTECTSNVATTTLFLPILASMAQAICLHPLYVMLPCTLAASLAFMLPVATPPNAIVFSFGGLKVSDMARAGFLLNIIGVLAITLSINSWSIPIFKLDTFPSWAHSNTSQCLLNPSNSTVPGGL</sequence>
<proteinExistence type="evidence at protein level"/>
<keyword id="KW-1003">Cell membrane</keyword>
<keyword id="KW-0406">Ion transport</keyword>
<keyword id="KW-0472">Membrane</keyword>
<keyword id="KW-1185">Reference proteome</keyword>
<keyword id="KW-0915">Sodium</keyword>
<keyword id="KW-0739">Sodium transport</keyword>
<keyword id="KW-0769">Symport</keyword>
<keyword id="KW-0812">Transmembrane</keyword>
<keyword id="KW-1133">Transmembrane helix</keyword>
<keyword id="KW-0813">Transport</keyword>
<accession>P70545</accession>
<accession>O35055</accession>
<name>S13A2_RAT</name>
<protein>
    <recommendedName>
        <fullName>Solute carrier family 13 member 2</fullName>
    </recommendedName>
    <alternativeName>
        <fullName>Intestinal sodium/dicarboxylate cotransporter</fullName>
    </alternativeName>
    <alternativeName>
        <fullName>Na(+)/dicarboxylate cotransporter 1</fullName>
        <shortName>NaDC-1</shortName>
    </alternativeName>
</protein>
<organism>
    <name type="scientific">Rattus norvegicus</name>
    <name type="common">Rat</name>
    <dbReference type="NCBI Taxonomy" id="10116"/>
    <lineage>
        <taxon>Eukaryota</taxon>
        <taxon>Metazoa</taxon>
        <taxon>Chordata</taxon>
        <taxon>Craniata</taxon>
        <taxon>Vertebrata</taxon>
        <taxon>Euteleostomi</taxon>
        <taxon>Mammalia</taxon>
        <taxon>Eutheria</taxon>
        <taxon>Euarchontoglires</taxon>
        <taxon>Glires</taxon>
        <taxon>Rodentia</taxon>
        <taxon>Myomorpha</taxon>
        <taxon>Muroidea</taxon>
        <taxon>Muridae</taxon>
        <taxon>Murinae</taxon>
        <taxon>Rattus</taxon>
    </lineage>
</organism>
<feature type="chain" id="PRO_0000172491" description="Solute carrier family 13 member 2">
    <location>
        <begin position="1"/>
        <end position="587"/>
    </location>
</feature>
<feature type="transmembrane region" description="Helical" evidence="2">
    <location>
        <begin position="13"/>
        <end position="33"/>
    </location>
</feature>
<feature type="transmembrane region" description="Helical" evidence="2">
    <location>
        <begin position="53"/>
        <end position="73"/>
    </location>
</feature>
<feature type="transmembrane region" description="Helical" evidence="2">
    <location>
        <begin position="86"/>
        <end position="106"/>
    </location>
</feature>
<feature type="transmembrane region" description="Helical" evidence="2">
    <location>
        <begin position="136"/>
        <end position="156"/>
    </location>
</feature>
<feature type="transmembrane region" description="Helical" evidence="2">
    <location>
        <begin position="264"/>
        <end position="284"/>
    </location>
</feature>
<feature type="transmembrane region" description="Helical" evidence="2">
    <location>
        <begin position="329"/>
        <end position="349"/>
    </location>
</feature>
<feature type="transmembrane region" description="Helical" evidence="2">
    <location>
        <begin position="367"/>
        <end position="387"/>
    </location>
</feature>
<feature type="transmembrane region" description="Helical" evidence="2">
    <location>
        <begin position="407"/>
        <end position="427"/>
    </location>
</feature>
<feature type="transmembrane region" description="Helical" evidence="2">
    <location>
        <begin position="445"/>
        <end position="465"/>
    </location>
</feature>
<feature type="transmembrane region" description="Helical" evidence="2">
    <location>
        <begin position="477"/>
        <end position="497"/>
    </location>
</feature>
<feature type="transmembrane region" description="Helical" evidence="2">
    <location>
        <begin position="506"/>
        <end position="526"/>
    </location>
</feature>
<feature type="transmembrane region" description="Helical" evidence="2">
    <location>
        <begin position="535"/>
        <end position="555"/>
    </location>
</feature>
<feature type="region of interest" description="Disordered" evidence="3">
    <location>
        <begin position="188"/>
        <end position="208"/>
    </location>
</feature>
<feature type="sequence conflict" description="In Ref. 1; AAB97095." evidence="7" ref="1">
    <original>A</original>
    <variation>V</variation>
    <location>
        <position position="60"/>
    </location>
</feature>
<feature type="sequence conflict" description="In Ref. 1; AAB97095." evidence="7" ref="1">
    <original>P</original>
    <variation>L</variation>
    <location>
        <position position="68"/>
    </location>
</feature>
<feature type="sequence conflict" description="In Ref. 1; AAB97095." evidence="7" ref="1">
    <original>VCI</original>
    <variation>GL</variation>
    <location>
        <begin position="78"/>
        <end position="80"/>
    </location>
</feature>
<feature type="sequence conflict" description="In Ref. 1; AAB97095." evidence="7" ref="1">
    <original>P</original>
    <variation>A</variation>
    <location>
        <position position="121"/>
    </location>
</feature>
<feature type="sequence conflict" description="In Ref. 1; AAB97095." evidence="7" ref="1">
    <original>G</original>
    <variation>A</variation>
    <location>
        <position position="161"/>
    </location>
</feature>
<feature type="sequence conflict" description="In Ref. 1; AAB97095." evidence="7" ref="1">
    <original>AT</original>
    <variation>DN</variation>
    <location>
        <begin position="230"/>
        <end position="231"/>
    </location>
</feature>
<feature type="sequence conflict" description="In Ref. 1; AAB97095." evidence="7" ref="1">
    <original>G</original>
    <variation>A</variation>
    <location>
        <position position="253"/>
    </location>
</feature>
<feature type="sequence conflict" description="In Ref. 1; AAB97095." evidence="7" ref="1">
    <original>V</original>
    <variation>CS</variation>
    <location>
        <position position="327"/>
    </location>
</feature>
<feature type="sequence conflict" description="In Ref. 1; AAB97095." evidence="7" ref="1">
    <original>A</original>
    <variation>P</variation>
    <location>
        <position position="363"/>
    </location>
</feature>
<feature type="sequence conflict" description="In Ref. 1; AAB97095." evidence="7" ref="1">
    <original>Q</original>
    <variation>E</variation>
    <location>
        <position position="388"/>
    </location>
</feature>
<feature type="sequence conflict" description="In Ref. 1; AAB97095." evidence="7" ref="1">
    <original>I</original>
    <variation>T</variation>
    <location>
        <position position="546"/>
    </location>
</feature>
<gene>
    <name type="primary">Slc13a2</name>
    <name type="synonym">Nadc1</name>
    <name evidence="6" type="synonym">Sdct1</name>
</gene>
<comment type="function">
    <text evidence="1 4 5">Low-affinity sodium-dicarboxylate cotransporter, that mediates the entry of citric acid cycle intermediates, such as succinate, citrate, fumarate and alpha-ketoglutarate (2-oxoglutarate) into the small intestine and renal proximal tubule (PubMed:9691021, PubMed:9694847). Transports the dicarboxylate into the cell with a probable stoichiometry of 3 Na(+) for 1 divalent dicarboxylate, rendering the process electrogenic (PubMed:9691021, PubMed:9694847). Citrate is transported in protonated form as a divalent anion, rather than the trivalent form which is normally found in blood (PubMed:9694847). Has a critical role in renal dicarboxylate transport (By similarity).</text>
</comment>
<comment type="catalytic activity">
    <reaction evidence="5 8">
        <text>succinate(out) + 3 Na(+)(out) = succinate(in) + 3 Na(+)(in)</text>
        <dbReference type="Rhea" id="RHEA:71919"/>
        <dbReference type="ChEBI" id="CHEBI:29101"/>
        <dbReference type="ChEBI" id="CHEBI:30031"/>
    </reaction>
</comment>
<comment type="catalytic activity">
    <reaction evidence="8">
        <text>fumarate(out) + 3 Na(+)(out) = fumarate(in) + 3 Na(+)(in)</text>
        <dbReference type="Rhea" id="RHEA:71931"/>
        <dbReference type="ChEBI" id="CHEBI:29101"/>
        <dbReference type="ChEBI" id="CHEBI:29806"/>
    </reaction>
</comment>
<comment type="catalytic activity">
    <reaction evidence="4 5">
        <text>2-oxoglutarate(out) + 3 Na(+)(out) = 2-oxoglutarate(in) + 3 Na(+)(in)</text>
        <dbReference type="Rhea" id="RHEA:71939"/>
        <dbReference type="ChEBI" id="CHEBI:16810"/>
        <dbReference type="ChEBI" id="CHEBI:29101"/>
    </reaction>
</comment>
<comment type="activity regulation">
    <text evidence="5">Li(+) decreases succinate transport in the presence of Na(+), by competing at one of the three cation binding sites.</text>
</comment>
<comment type="biophysicochemical properties">
    <kinetics>
        <KM evidence="4">57.1 uM for 2-oxoglutarate</KM>
        <KM evidence="4">29.4 uM for succinate</KM>
        <KM evidence="5">24 uM for succinate</KM>
        <KM evidence="4">45 uM for 2-oxoglutarate</KM>
        <KM evidence="5">0.64 mM for citrate (at pH 7.5)</KM>
        <KM evidence="5">57 uM for citrate (at pH 5.5)</KM>
    </kinetics>
</comment>
<comment type="subcellular location">
    <subcellularLocation>
        <location evidence="4">Apical cell membrane</location>
        <topology evidence="2">Multi-pass membrane protein</topology>
    </subcellularLocation>
</comment>
<comment type="tissue specificity">
    <text evidence="4 5">Expressed in large and small intestine and in the kidney proximal tubules.</text>
</comment>
<comment type="similarity">
    <text evidence="7">Belongs to the SLC13A/DASS transporter (TC 2.A.47) family. NADC subfamily.</text>
</comment>
<comment type="sequence caution" evidence="7">
    <conflict type="frameshift">
        <sequence resource="EMBL-CDS" id="AAB97095"/>
    </conflict>
</comment>
<reference key="1">
    <citation type="journal article" date="1996" name="Biochim. Biophys. Acta">
        <title>Cloning of the cDNA for a rat intestinal Na+/dicarboxylate cotransporter reveals partial sequence homology with a rat intestinal mucin.</title>
        <authorList>
            <person name="Khatri I.A."/>
            <person name="Kovacs S.V.B."/>
            <person name="Forstner J.F."/>
        </authorList>
    </citation>
    <scope>NUCLEOTIDE SEQUENCE [MRNA]</scope>
    <source>
        <strain>Wistar</strain>
    </source>
</reference>
<reference key="2">
    <citation type="journal article" date="1998" name="Am. J. Physiol.">
        <title>Cloning, functional characterization, and localization of a rat renal Na+-dicarboxylate transporter.</title>
        <authorList>
            <person name="Sekine T."/>
            <person name="Cha S.H."/>
            <person name="Hosoyamada M."/>
            <person name="Kanai Y."/>
            <person name="Watanabe N."/>
            <person name="Furuta Y."/>
            <person name="Fukuda K."/>
            <person name="Igarashi T."/>
            <person name="Endou H."/>
        </authorList>
    </citation>
    <scope>NUCLEOTIDE SEQUENCE [MRNA]</scope>
    <scope>FUNCTION</scope>
    <scope>TRANSPORTER ACTIVITY</scope>
    <scope>TISSUE SPECIFICITY</scope>
    <scope>SUBCELLULAR LOCATION</scope>
    <source>
        <strain>Sprague-Dawley</strain>
        <tissue>Kidney</tissue>
    </source>
</reference>
<reference key="3">
    <citation type="journal article" date="1998" name="J. Biol. Chem.">
        <title>Characterization of a rat Na+-dicarboxylate cotransporter.</title>
        <authorList>
            <person name="Chen X.Z."/>
            <person name="Shayakul C."/>
            <person name="Berger U.V."/>
            <person name="Tian W."/>
            <person name="Hediger M.A."/>
        </authorList>
    </citation>
    <scope>NUCLEOTIDE SEQUENCE [MRNA]</scope>
    <scope>FUNCTION</scope>
    <scope>TRANSPORT ACTIVITY</scope>
    <scope>BIOPHYSICOCHEMICAL PROPERTIES</scope>
    <scope>TISSUE SPECIFICITY</scope>
    <scope>ACTIVITY REGULATION</scope>
    <source>
        <strain>Sprague-Dawley</strain>
    </source>
</reference>
<reference key="4">
    <citation type="journal article" date="2004" name="Nature">
        <title>Genome sequence of the Brown Norway rat yields insights into mammalian evolution.</title>
        <authorList>
            <person name="Gibbs R.A."/>
            <person name="Weinstock G.M."/>
            <person name="Metzker M.L."/>
            <person name="Muzny D.M."/>
            <person name="Sodergren E.J."/>
            <person name="Scherer S."/>
            <person name="Scott G."/>
            <person name="Steffen D."/>
            <person name="Worley K.C."/>
            <person name="Burch P.E."/>
            <person name="Okwuonu G."/>
            <person name="Hines S."/>
            <person name="Lewis L."/>
            <person name="Deramo C."/>
            <person name="Delgado O."/>
            <person name="Dugan-Rocha S."/>
            <person name="Miner G."/>
            <person name="Morgan M."/>
            <person name="Hawes A."/>
            <person name="Gill R."/>
            <person name="Holt R.A."/>
            <person name="Adams M.D."/>
            <person name="Amanatides P.G."/>
            <person name="Baden-Tillson H."/>
            <person name="Barnstead M."/>
            <person name="Chin S."/>
            <person name="Evans C.A."/>
            <person name="Ferriera S."/>
            <person name="Fosler C."/>
            <person name="Glodek A."/>
            <person name="Gu Z."/>
            <person name="Jennings D."/>
            <person name="Kraft C.L."/>
            <person name="Nguyen T."/>
            <person name="Pfannkoch C.M."/>
            <person name="Sitter C."/>
            <person name="Sutton G.G."/>
            <person name="Venter J.C."/>
            <person name="Woodage T."/>
            <person name="Smith D."/>
            <person name="Lee H.-M."/>
            <person name="Gustafson E."/>
            <person name="Cahill P."/>
            <person name="Kana A."/>
            <person name="Doucette-Stamm L."/>
            <person name="Weinstock K."/>
            <person name="Fechtel K."/>
            <person name="Weiss R.B."/>
            <person name="Dunn D.M."/>
            <person name="Green E.D."/>
            <person name="Blakesley R.W."/>
            <person name="Bouffard G.G."/>
            <person name="De Jong P.J."/>
            <person name="Osoegawa K."/>
            <person name="Zhu B."/>
            <person name="Marra M."/>
            <person name="Schein J."/>
            <person name="Bosdet I."/>
            <person name="Fjell C."/>
            <person name="Jones S."/>
            <person name="Krzywinski M."/>
            <person name="Mathewson C."/>
            <person name="Siddiqui A."/>
            <person name="Wye N."/>
            <person name="McPherson J."/>
            <person name="Zhao S."/>
            <person name="Fraser C.M."/>
            <person name="Shetty J."/>
            <person name="Shatsman S."/>
            <person name="Geer K."/>
            <person name="Chen Y."/>
            <person name="Abramzon S."/>
            <person name="Nierman W.C."/>
            <person name="Havlak P.H."/>
            <person name="Chen R."/>
            <person name="Durbin K.J."/>
            <person name="Egan A."/>
            <person name="Ren Y."/>
            <person name="Song X.-Z."/>
            <person name="Li B."/>
            <person name="Liu Y."/>
            <person name="Qin X."/>
            <person name="Cawley S."/>
            <person name="Cooney A.J."/>
            <person name="D'Souza L.M."/>
            <person name="Martin K."/>
            <person name="Wu J.Q."/>
            <person name="Gonzalez-Garay M.L."/>
            <person name="Jackson A.R."/>
            <person name="Kalafus K.J."/>
            <person name="McLeod M.P."/>
            <person name="Milosavljevic A."/>
            <person name="Virk D."/>
            <person name="Volkov A."/>
            <person name="Wheeler D.A."/>
            <person name="Zhang Z."/>
            <person name="Bailey J.A."/>
            <person name="Eichler E.E."/>
            <person name="Tuzun E."/>
            <person name="Birney E."/>
            <person name="Mongin E."/>
            <person name="Ureta-Vidal A."/>
            <person name="Woodwark C."/>
            <person name="Zdobnov E."/>
            <person name="Bork P."/>
            <person name="Suyama M."/>
            <person name="Torrents D."/>
            <person name="Alexandersson M."/>
            <person name="Trask B.J."/>
            <person name="Young J.M."/>
            <person name="Huang H."/>
            <person name="Wang H."/>
            <person name="Xing H."/>
            <person name="Daniels S."/>
            <person name="Gietzen D."/>
            <person name="Schmidt J."/>
            <person name="Stevens K."/>
            <person name="Vitt U."/>
            <person name="Wingrove J."/>
            <person name="Camara F."/>
            <person name="Mar Alba M."/>
            <person name="Abril J.F."/>
            <person name="Guigo R."/>
            <person name="Smit A."/>
            <person name="Dubchak I."/>
            <person name="Rubin E.M."/>
            <person name="Couronne O."/>
            <person name="Poliakov A."/>
            <person name="Huebner N."/>
            <person name="Ganten D."/>
            <person name="Goesele C."/>
            <person name="Hummel O."/>
            <person name="Kreitler T."/>
            <person name="Lee Y.-A."/>
            <person name="Monti J."/>
            <person name="Schulz H."/>
            <person name="Zimdahl H."/>
            <person name="Himmelbauer H."/>
            <person name="Lehrach H."/>
            <person name="Jacob H.J."/>
            <person name="Bromberg S."/>
            <person name="Gullings-Handley J."/>
            <person name="Jensen-Seaman M.I."/>
            <person name="Kwitek A.E."/>
            <person name="Lazar J."/>
            <person name="Pasko D."/>
            <person name="Tonellato P.J."/>
            <person name="Twigger S."/>
            <person name="Ponting C.P."/>
            <person name="Duarte J.M."/>
            <person name="Rice S."/>
            <person name="Goodstadt L."/>
            <person name="Beatson S.A."/>
            <person name="Emes R.D."/>
            <person name="Winter E.E."/>
            <person name="Webber C."/>
            <person name="Brandt P."/>
            <person name="Nyakatura G."/>
            <person name="Adetobi M."/>
            <person name="Chiaromonte F."/>
            <person name="Elnitski L."/>
            <person name="Eswara P."/>
            <person name="Hardison R.C."/>
            <person name="Hou M."/>
            <person name="Kolbe D."/>
            <person name="Makova K."/>
            <person name="Miller W."/>
            <person name="Nekrutenko A."/>
            <person name="Riemer C."/>
            <person name="Schwartz S."/>
            <person name="Taylor J."/>
            <person name="Yang S."/>
            <person name="Zhang Y."/>
            <person name="Lindpaintner K."/>
            <person name="Andrews T.D."/>
            <person name="Caccamo M."/>
            <person name="Clamp M."/>
            <person name="Clarke L."/>
            <person name="Curwen V."/>
            <person name="Durbin R.M."/>
            <person name="Eyras E."/>
            <person name="Searle S.M."/>
            <person name="Cooper G.M."/>
            <person name="Batzoglou S."/>
            <person name="Brudno M."/>
            <person name="Sidow A."/>
            <person name="Stone E.A."/>
            <person name="Payseur B.A."/>
            <person name="Bourque G."/>
            <person name="Lopez-Otin C."/>
            <person name="Puente X.S."/>
            <person name="Chakrabarti K."/>
            <person name="Chatterji S."/>
            <person name="Dewey C."/>
            <person name="Pachter L."/>
            <person name="Bray N."/>
            <person name="Yap V.B."/>
            <person name="Caspi A."/>
            <person name="Tesler G."/>
            <person name="Pevzner P.A."/>
            <person name="Haussler D."/>
            <person name="Roskin K.M."/>
            <person name="Baertsch R."/>
            <person name="Clawson H."/>
            <person name="Furey T.S."/>
            <person name="Hinrichs A.S."/>
            <person name="Karolchik D."/>
            <person name="Kent W.J."/>
            <person name="Rosenbloom K.R."/>
            <person name="Trumbower H."/>
            <person name="Weirauch M."/>
            <person name="Cooper D.N."/>
            <person name="Stenson P.D."/>
            <person name="Ma B."/>
            <person name="Brent M."/>
            <person name="Arumugam M."/>
            <person name="Shteynberg D."/>
            <person name="Copley R.R."/>
            <person name="Taylor M.S."/>
            <person name="Riethman H."/>
            <person name="Mudunuri U."/>
            <person name="Peterson J."/>
            <person name="Guyer M."/>
            <person name="Felsenfeld A."/>
            <person name="Old S."/>
            <person name="Mockrin S."/>
            <person name="Collins F.S."/>
        </authorList>
    </citation>
    <scope>NUCLEOTIDE SEQUENCE [LARGE SCALE GENOMIC DNA]</scope>
    <source>
        <strain>Brown Norway</strain>
    </source>
</reference>
<reference key="5">
    <citation type="submission" date="2005-07" db="EMBL/GenBank/DDBJ databases">
        <authorList>
            <person name="Mural R.J."/>
            <person name="Li P.W."/>
            <person name="Adams M.D."/>
            <person name="Amanatides P.G."/>
            <person name="Baden-Tillson H."/>
            <person name="Barnstead M."/>
            <person name="Chin S.H."/>
            <person name="Dew I."/>
            <person name="Evans C.A."/>
            <person name="Ferriera S."/>
            <person name="Flanigan M."/>
            <person name="Fosler C."/>
            <person name="Glodek A."/>
            <person name="Gu Z."/>
            <person name="Holt R.A."/>
            <person name="Jennings D."/>
            <person name="Kraft C.L."/>
            <person name="Lu F."/>
            <person name="Nguyen T."/>
            <person name="Nusskern D.R."/>
            <person name="Pfannkoch C.M."/>
            <person name="Sitter C."/>
            <person name="Sutton G.G."/>
            <person name="Venter J.C."/>
            <person name="Wang Z."/>
            <person name="Woodage T."/>
            <person name="Zheng X.H."/>
            <person name="Zhong F."/>
        </authorList>
    </citation>
    <scope>NUCLEOTIDE SEQUENCE [LARGE SCALE GENOMIC DNA]</scope>
</reference>
<evidence type="ECO:0000250" key="1">
    <source>
        <dbReference type="UniProtKB" id="Q9ES88"/>
    </source>
</evidence>
<evidence type="ECO:0000255" key="2"/>
<evidence type="ECO:0000256" key="3">
    <source>
        <dbReference type="SAM" id="MobiDB-lite"/>
    </source>
</evidence>
<evidence type="ECO:0000269" key="4">
    <source>
    </source>
</evidence>
<evidence type="ECO:0000269" key="5">
    <source>
    </source>
</evidence>
<evidence type="ECO:0000303" key="6">
    <source>
    </source>
</evidence>
<evidence type="ECO:0000305" key="7"/>
<evidence type="ECO:0000305" key="8">
    <source>
    </source>
</evidence>